<comment type="function">
    <text>In the wool cortex, wool keratin intermediate filaments are embedded in an interfilamentous matrix, consisting of hair keratin-associated proteins (KRTAP), which are essential for the formation of a rigid and resistant wool shaft through their extensive disulfide bond cross-linking with abundant cysteine residues of wool keratins. The matrix proteins include the high-sulfur and high-glycine-tyrosine keratins.</text>
</comment>
<comment type="subunit">
    <text>Interacts with wool keratins.</text>
</comment>
<comment type="tissue specificity">
    <text>Wool.</text>
</comment>
<comment type="similarity">
    <text evidence="2">Belongs to the KRTAP type 8 family.</text>
</comment>
<protein>
    <recommendedName>
        <fullName>Keratin-associated protein 8-1</fullName>
    </recommendedName>
    <alternativeName>
        <fullName>Component 0.62</fullName>
    </alternativeName>
    <alternativeName>
        <fullName>HGT keratin</fullName>
    </alternativeName>
    <alternativeName>
        <fullName>HGT keratin component F</fullName>
    </alternativeName>
    <alternativeName>
        <fullName>Keratin, high-tyrosine matrix protein</fullName>
    </alternativeName>
</protein>
<evidence type="ECO:0000269" key="1">
    <source>
    </source>
</evidence>
<evidence type="ECO:0000305" key="2"/>
<dbReference type="EMBL" id="X05639">
    <property type="protein sequence ID" value="CAA29126.1"/>
    <property type="molecule type" value="Genomic_DNA"/>
</dbReference>
<dbReference type="EMBL" id="M28304">
    <property type="protein sequence ID" value="AAA31536.1"/>
    <property type="molecule type" value="mRNA"/>
</dbReference>
<dbReference type="PIR" id="S00031">
    <property type="entry name" value="KRSHI6"/>
</dbReference>
<dbReference type="STRING" id="9940.ENSOARP00000000675"/>
<dbReference type="PaxDb" id="9940-ENSOARP00000000675"/>
<dbReference type="Ensembl" id="ENSOART00180020522">
    <property type="protein sequence ID" value="ENSOARP00180010522"/>
    <property type="gene ID" value="ENSOARG00180012550"/>
</dbReference>
<dbReference type="Ensembl" id="ENSOART00185019585">
    <property type="protein sequence ID" value="ENSOARP00185009798"/>
    <property type="gene ID" value="ENSOARG00185011979"/>
</dbReference>
<dbReference type="Ensembl" id="ENSOART00215081020">
    <property type="protein sequence ID" value="ENSOARP00215044840"/>
    <property type="gene ID" value="ENSOARG00215047714"/>
</dbReference>
<dbReference type="Ensembl" id="ENSOART00220013217">
    <property type="protein sequence ID" value="ENSOARP00220007563"/>
    <property type="gene ID" value="ENSOARG00220007914"/>
</dbReference>
<dbReference type="Ensembl" id="ENSOART00225068369">
    <property type="protein sequence ID" value="ENSOARP00225035016"/>
    <property type="gene ID" value="ENSOARG00225041178"/>
</dbReference>
<dbReference type="Ensembl" id="ENSOART00260001789">
    <property type="protein sequence ID" value="ENSOARP00260001202"/>
    <property type="gene ID" value="ENSOARG00260000986"/>
</dbReference>
<dbReference type="eggNOG" id="ENOG502SW61">
    <property type="taxonomic scope" value="Eukaryota"/>
</dbReference>
<dbReference type="OMA" id="RRYWPYA"/>
<dbReference type="OrthoDB" id="9449428at2759"/>
<dbReference type="Proteomes" id="UP000002356">
    <property type="component" value="Unplaced"/>
</dbReference>
<dbReference type="GO" id="GO:0005829">
    <property type="term" value="C:cytosol"/>
    <property type="evidence" value="ECO:0007669"/>
    <property type="project" value="UniProtKB-ARBA"/>
</dbReference>
<dbReference type="GO" id="GO:0005882">
    <property type="term" value="C:intermediate filament"/>
    <property type="evidence" value="ECO:0007669"/>
    <property type="project" value="UniProtKB-KW"/>
</dbReference>
<dbReference type="InterPro" id="IPR039351">
    <property type="entry name" value="KRTAP8-1"/>
</dbReference>
<dbReference type="InterPro" id="IPR021743">
    <property type="entry name" value="KRTAP_type8/19/20/21/22"/>
</dbReference>
<dbReference type="PANTHER" id="PTHR36131">
    <property type="entry name" value="KERATIN-ASSOCIATED PROTEIN 8-1"/>
    <property type="match status" value="1"/>
</dbReference>
<dbReference type="PANTHER" id="PTHR36131:SF1">
    <property type="entry name" value="KERATIN-ASSOCIATED PROTEIN 8-1"/>
    <property type="match status" value="1"/>
</dbReference>
<dbReference type="Pfam" id="PF11759">
    <property type="entry name" value="KRTAP"/>
    <property type="match status" value="1"/>
</dbReference>
<reference key="1">
    <citation type="journal article" date="1987" name="Eur. J. Biochem.">
        <title>Sheep wool (glycine + tyrosine)-rich keratin genes. A family of low sequence homology.</title>
        <authorList>
            <person name="Kuczek E.S."/>
            <person name="Rogers G.E."/>
        </authorList>
    </citation>
    <scope>NUCLEOTIDE SEQUENCE [GENOMIC DNA]</scope>
    <source>
        <strain>Merino</strain>
    </source>
</reference>
<reference key="2">
    <citation type="journal article" date="1973" name="Eur. J. Biochem.">
        <title>The primary structure of a protein, component 0.62, rich in glycine and aromatic residues, obtained from wool keratin.</title>
        <authorList>
            <person name="Dopheide T.A.A."/>
        </authorList>
    </citation>
    <scope>PROTEIN SEQUENCE OF 2-62</scope>
    <source>
        <strain>Merino</strain>
    </source>
</reference>
<reference key="3">
    <citation type="journal article" date="1985" name="Eur. J. Biochem.">
        <title>Sheep keratins: characterization of cDNA clones for the glycine + tyrosine-rich wool proteins using a synthetic probe.</title>
        <authorList>
            <person name="Kuczek E.S."/>
            <person name="Rogers G.E."/>
        </authorList>
    </citation>
    <scope>NUCLEOTIDE SEQUENCE [MRNA] OF 15-62</scope>
    <source>
        <strain>Merino</strain>
    </source>
</reference>
<proteinExistence type="evidence at protein level"/>
<gene>
    <name type="primary">KRTAP8-1</name>
    <name type="synonym">HGT</name>
</gene>
<sequence>MSYCFSSTVFPGCYWGSYGYPLGYSVGCGYGSTYSPVGYGFGYGYNGSGAFGCRRFWPFALY</sequence>
<accession>P02448</accession>
<accession>Q28581</accession>
<accession>Q28750</accession>
<keyword id="KW-0903">Direct protein sequencing</keyword>
<keyword id="KW-0416">Keratin</keyword>
<keyword id="KW-1185">Reference proteome</keyword>
<keyword id="KW-0677">Repeat</keyword>
<name>KRA81_SHEEP</name>
<organism>
    <name type="scientific">Ovis aries</name>
    <name type="common">Sheep</name>
    <dbReference type="NCBI Taxonomy" id="9940"/>
    <lineage>
        <taxon>Eukaryota</taxon>
        <taxon>Metazoa</taxon>
        <taxon>Chordata</taxon>
        <taxon>Craniata</taxon>
        <taxon>Vertebrata</taxon>
        <taxon>Euteleostomi</taxon>
        <taxon>Mammalia</taxon>
        <taxon>Eutheria</taxon>
        <taxon>Laurasiatheria</taxon>
        <taxon>Artiodactyla</taxon>
        <taxon>Ruminantia</taxon>
        <taxon>Pecora</taxon>
        <taxon>Bovidae</taxon>
        <taxon>Caprinae</taxon>
        <taxon>Ovis</taxon>
    </lineage>
</organism>
<feature type="initiator methionine" description="Removed" evidence="1">
    <location>
        <position position="1"/>
    </location>
</feature>
<feature type="chain" id="PRO_0000185187" description="Keratin-associated protein 8-1">
    <location>
        <begin position="2"/>
        <end position="62"/>
    </location>
</feature>
<feature type="region of interest" description="12 X 2 AA repeats of G-[YCGS]">
    <location>
        <begin position="12"/>
        <end position="53"/>
    </location>
</feature>
<feature type="sequence conflict" description="In Ref. 2; AA sequence." evidence="2" ref="2">
    <original>NGSG</original>
    <variation>DGGS</variation>
    <location>
        <begin position="46"/>
        <end position="49"/>
    </location>
</feature>
<feature type="sequence conflict" description="In Ref. 1; CAA29126." evidence="2" ref="1">
    <original>F</original>
    <variation>S</variation>
    <location>
        <position position="51"/>
    </location>
</feature>